<gene>
    <name evidence="1" type="primary">asnS</name>
    <name type="ordered locus">RB13263</name>
</gene>
<organism>
    <name type="scientific">Rhodopirellula baltica (strain DSM 10527 / NCIMB 13988 / SH1)</name>
    <dbReference type="NCBI Taxonomy" id="243090"/>
    <lineage>
        <taxon>Bacteria</taxon>
        <taxon>Pseudomonadati</taxon>
        <taxon>Planctomycetota</taxon>
        <taxon>Planctomycetia</taxon>
        <taxon>Pirellulales</taxon>
        <taxon>Pirellulaceae</taxon>
        <taxon>Rhodopirellula</taxon>
    </lineage>
</organism>
<proteinExistence type="inferred from homology"/>
<reference key="1">
    <citation type="journal article" date="2003" name="Proc. Natl. Acad. Sci. U.S.A.">
        <title>Complete genome sequence of the marine planctomycete Pirellula sp. strain 1.</title>
        <authorList>
            <person name="Gloeckner F.O."/>
            <person name="Kube M."/>
            <person name="Bauer M."/>
            <person name="Teeling H."/>
            <person name="Lombardot T."/>
            <person name="Ludwig W."/>
            <person name="Gade D."/>
            <person name="Beck A."/>
            <person name="Borzym K."/>
            <person name="Heitmann K."/>
            <person name="Rabus R."/>
            <person name="Schlesner H."/>
            <person name="Amann R."/>
            <person name="Reinhardt R."/>
        </authorList>
    </citation>
    <scope>NUCLEOTIDE SEQUENCE [LARGE SCALE GENOMIC DNA]</scope>
    <source>
        <strain>DSM 10527 / NCIMB 13988 / SH1</strain>
    </source>
</reference>
<sequence length="490" mass="55855">MWWRRSRTNSLRYTVHPFASLQRSMIAPMDWTTIDACRTSTELPRPVEIRGWIRTRRDSKGGFSFLEVNDGTSLGNLQVVAPAELENYAEEIQKLTAGCSVVVQGELVESPAKGQSTELHASSVRVIGWCDGETYPLQKKRHSFEKLREWSHLRARTNTLGAVMRVRNRISQSIHRFFDDEGFNYLHTPIITASDCEGAGEMFRVTTLNLEKLAGSNRPFDTKQDFFQKPTHLTVSGQLEAETYATALSRVYTFGPTFRAENSNTSRHLAEFWMVEPEAAFYDLNDNMQLAERFLKRVFSDCLSHCGEDMDFFNERIEKGKIDQLKSVIEKPFEHMTYTDAVERLLACDEKFEYPVNWGTDLQAEHERYLTSVVGGPVILTDYPSSIKPFYMRVSDDGKTVAAMDVLVPGVGEIIGGSQREERLDVLQRRMAEGGLDESEYWWYVDLRRYGTVPHAGFGLGLERAVQYVTGMANIRDVIPFPRTPGNAEF</sequence>
<dbReference type="EC" id="6.1.1.22" evidence="1"/>
<dbReference type="EMBL" id="BX294156">
    <property type="protein sequence ID" value="CAD78031.1"/>
    <property type="molecule type" value="Genomic_DNA"/>
</dbReference>
<dbReference type="RefSeq" id="NP_870953.2">
    <property type="nucleotide sequence ID" value="NC_005027.1"/>
</dbReference>
<dbReference type="SMR" id="Q7UHE1"/>
<dbReference type="FunCoup" id="Q7UHE1">
    <property type="interactions" value="443"/>
</dbReference>
<dbReference type="STRING" id="243090.RB13263"/>
<dbReference type="EnsemblBacteria" id="CAD78031">
    <property type="protein sequence ID" value="CAD78031"/>
    <property type="gene ID" value="RB13263"/>
</dbReference>
<dbReference type="KEGG" id="rba:RB13263"/>
<dbReference type="PATRIC" id="fig|243090.15.peg.6425"/>
<dbReference type="eggNOG" id="COG0017">
    <property type="taxonomic scope" value="Bacteria"/>
</dbReference>
<dbReference type="HOGENOM" id="CLU_004553_2_0_0"/>
<dbReference type="InParanoid" id="Q7UHE1"/>
<dbReference type="OrthoDB" id="9762036at2"/>
<dbReference type="Proteomes" id="UP000001025">
    <property type="component" value="Chromosome"/>
</dbReference>
<dbReference type="GO" id="GO:0005737">
    <property type="term" value="C:cytoplasm"/>
    <property type="evidence" value="ECO:0007669"/>
    <property type="project" value="UniProtKB-SubCell"/>
</dbReference>
<dbReference type="GO" id="GO:0004816">
    <property type="term" value="F:asparagine-tRNA ligase activity"/>
    <property type="evidence" value="ECO:0007669"/>
    <property type="project" value="UniProtKB-UniRule"/>
</dbReference>
<dbReference type="GO" id="GO:0005524">
    <property type="term" value="F:ATP binding"/>
    <property type="evidence" value="ECO:0007669"/>
    <property type="project" value="UniProtKB-UniRule"/>
</dbReference>
<dbReference type="GO" id="GO:0003676">
    <property type="term" value="F:nucleic acid binding"/>
    <property type="evidence" value="ECO:0007669"/>
    <property type="project" value="InterPro"/>
</dbReference>
<dbReference type="GO" id="GO:0006421">
    <property type="term" value="P:asparaginyl-tRNA aminoacylation"/>
    <property type="evidence" value="ECO:0000318"/>
    <property type="project" value="GO_Central"/>
</dbReference>
<dbReference type="CDD" id="cd00776">
    <property type="entry name" value="AsxRS_core"/>
    <property type="match status" value="1"/>
</dbReference>
<dbReference type="CDD" id="cd04318">
    <property type="entry name" value="EcAsnRS_like_N"/>
    <property type="match status" value="1"/>
</dbReference>
<dbReference type="FunFam" id="3.30.930.10:FF:000016">
    <property type="entry name" value="Asparagine--tRNA ligase"/>
    <property type="match status" value="1"/>
</dbReference>
<dbReference type="Gene3D" id="3.30.930.10">
    <property type="entry name" value="Bira Bifunctional Protein, Domain 2"/>
    <property type="match status" value="1"/>
</dbReference>
<dbReference type="Gene3D" id="2.40.50.140">
    <property type="entry name" value="Nucleic acid-binding proteins"/>
    <property type="match status" value="1"/>
</dbReference>
<dbReference type="HAMAP" id="MF_00534">
    <property type="entry name" value="Asn_tRNA_synth"/>
    <property type="match status" value="1"/>
</dbReference>
<dbReference type="InterPro" id="IPR004364">
    <property type="entry name" value="Aa-tRNA-synt_II"/>
</dbReference>
<dbReference type="InterPro" id="IPR006195">
    <property type="entry name" value="aa-tRNA-synth_II"/>
</dbReference>
<dbReference type="InterPro" id="IPR045864">
    <property type="entry name" value="aa-tRNA-synth_II/BPL/LPL"/>
</dbReference>
<dbReference type="InterPro" id="IPR004522">
    <property type="entry name" value="Asn-tRNA-ligase"/>
</dbReference>
<dbReference type="InterPro" id="IPR002312">
    <property type="entry name" value="Asp/Asn-tRNA-synth_IIb"/>
</dbReference>
<dbReference type="InterPro" id="IPR012340">
    <property type="entry name" value="NA-bd_OB-fold"/>
</dbReference>
<dbReference type="InterPro" id="IPR004365">
    <property type="entry name" value="NA-bd_OB_tRNA"/>
</dbReference>
<dbReference type="NCBIfam" id="TIGR00457">
    <property type="entry name" value="asnS"/>
    <property type="match status" value="1"/>
</dbReference>
<dbReference type="NCBIfam" id="NF003037">
    <property type="entry name" value="PRK03932.1"/>
    <property type="match status" value="1"/>
</dbReference>
<dbReference type="PANTHER" id="PTHR22594:SF34">
    <property type="entry name" value="ASPARAGINE--TRNA LIGASE, MITOCHONDRIAL-RELATED"/>
    <property type="match status" value="1"/>
</dbReference>
<dbReference type="PANTHER" id="PTHR22594">
    <property type="entry name" value="ASPARTYL/LYSYL-TRNA SYNTHETASE"/>
    <property type="match status" value="1"/>
</dbReference>
<dbReference type="Pfam" id="PF00152">
    <property type="entry name" value="tRNA-synt_2"/>
    <property type="match status" value="1"/>
</dbReference>
<dbReference type="Pfam" id="PF01336">
    <property type="entry name" value="tRNA_anti-codon"/>
    <property type="match status" value="1"/>
</dbReference>
<dbReference type="PRINTS" id="PR01042">
    <property type="entry name" value="TRNASYNTHASP"/>
</dbReference>
<dbReference type="SUPFAM" id="SSF55681">
    <property type="entry name" value="Class II aaRS and biotin synthetases"/>
    <property type="match status" value="1"/>
</dbReference>
<dbReference type="SUPFAM" id="SSF50249">
    <property type="entry name" value="Nucleic acid-binding proteins"/>
    <property type="match status" value="1"/>
</dbReference>
<dbReference type="PROSITE" id="PS50862">
    <property type="entry name" value="AA_TRNA_LIGASE_II"/>
    <property type="match status" value="1"/>
</dbReference>
<accession>Q7UHE1</accession>
<name>SYN_RHOBA</name>
<comment type="catalytic activity">
    <reaction evidence="1">
        <text>tRNA(Asn) + L-asparagine + ATP = L-asparaginyl-tRNA(Asn) + AMP + diphosphate + H(+)</text>
        <dbReference type="Rhea" id="RHEA:11180"/>
        <dbReference type="Rhea" id="RHEA-COMP:9659"/>
        <dbReference type="Rhea" id="RHEA-COMP:9674"/>
        <dbReference type="ChEBI" id="CHEBI:15378"/>
        <dbReference type="ChEBI" id="CHEBI:30616"/>
        <dbReference type="ChEBI" id="CHEBI:33019"/>
        <dbReference type="ChEBI" id="CHEBI:58048"/>
        <dbReference type="ChEBI" id="CHEBI:78442"/>
        <dbReference type="ChEBI" id="CHEBI:78515"/>
        <dbReference type="ChEBI" id="CHEBI:456215"/>
        <dbReference type="EC" id="6.1.1.22"/>
    </reaction>
</comment>
<comment type="subunit">
    <text evidence="1">Homodimer.</text>
</comment>
<comment type="subcellular location">
    <subcellularLocation>
        <location evidence="1">Cytoplasm</location>
    </subcellularLocation>
</comment>
<comment type="similarity">
    <text evidence="1">Belongs to the class-II aminoacyl-tRNA synthetase family.</text>
</comment>
<keyword id="KW-0030">Aminoacyl-tRNA synthetase</keyword>
<keyword id="KW-0067">ATP-binding</keyword>
<keyword id="KW-0963">Cytoplasm</keyword>
<keyword id="KW-0436">Ligase</keyword>
<keyword id="KW-0547">Nucleotide-binding</keyword>
<keyword id="KW-0648">Protein biosynthesis</keyword>
<keyword id="KW-1185">Reference proteome</keyword>
<protein>
    <recommendedName>
        <fullName evidence="1">Asparagine--tRNA ligase</fullName>
        <ecNumber evidence="1">6.1.1.22</ecNumber>
    </recommendedName>
    <alternativeName>
        <fullName evidence="1">Asparaginyl-tRNA synthetase</fullName>
        <shortName evidence="1">AsnRS</shortName>
    </alternativeName>
</protein>
<evidence type="ECO:0000255" key="1">
    <source>
        <dbReference type="HAMAP-Rule" id="MF_00534"/>
    </source>
</evidence>
<feature type="chain" id="PRO_0000176442" description="Asparagine--tRNA ligase">
    <location>
        <begin position="1"/>
        <end position="490"/>
    </location>
</feature>